<protein>
    <recommendedName>
        <fullName evidence="1">Peptidyl-tRNA hydrolase</fullName>
        <shortName evidence="1">Pth</shortName>
        <ecNumber evidence="1">3.1.1.29</ecNumber>
    </recommendedName>
</protein>
<sequence length="201" mass="22026">MIKLIVGLGNPGAEYTATRHNAGFWLVDQLAREAGATLRDERRFHGFYAKARLFGEEVHLLEPQTYMNRSGQAVVALAHFFKILPTEILVAHDELDLPPGAAKLKLGGGSGGHNGLKDISAHLSSQQYWRLRIGIGHPRDLIPESARAGAKPDVANFVLKPPRKDEQDLIDAAIERALAVMPTAIKGETERAMMQLHRNGA</sequence>
<accession>A3NR95</accession>
<feature type="chain" id="PRO_1000010574" description="Peptidyl-tRNA hydrolase">
    <location>
        <begin position="1"/>
        <end position="201"/>
    </location>
</feature>
<feature type="active site" description="Proton acceptor" evidence="1">
    <location>
        <position position="20"/>
    </location>
</feature>
<feature type="binding site" evidence="1">
    <location>
        <position position="15"/>
    </location>
    <ligand>
        <name>tRNA</name>
        <dbReference type="ChEBI" id="CHEBI:17843"/>
    </ligand>
</feature>
<feature type="binding site" evidence="1">
    <location>
        <position position="66"/>
    </location>
    <ligand>
        <name>tRNA</name>
        <dbReference type="ChEBI" id="CHEBI:17843"/>
    </ligand>
</feature>
<feature type="binding site" evidence="1">
    <location>
        <position position="68"/>
    </location>
    <ligand>
        <name>tRNA</name>
        <dbReference type="ChEBI" id="CHEBI:17843"/>
    </ligand>
</feature>
<feature type="binding site" evidence="1">
    <location>
        <position position="114"/>
    </location>
    <ligand>
        <name>tRNA</name>
        <dbReference type="ChEBI" id="CHEBI:17843"/>
    </ligand>
</feature>
<feature type="site" description="Discriminates between blocked and unblocked aminoacyl-tRNA" evidence="1">
    <location>
        <position position="10"/>
    </location>
</feature>
<feature type="site" description="Stabilizes the basic form of H active site to accept a proton" evidence="1">
    <location>
        <position position="93"/>
    </location>
</feature>
<proteinExistence type="inferred from homology"/>
<dbReference type="EC" id="3.1.1.29" evidence="1"/>
<dbReference type="EMBL" id="CP000572">
    <property type="protein sequence ID" value="ABN90851.1"/>
    <property type="molecule type" value="Genomic_DNA"/>
</dbReference>
<dbReference type="RefSeq" id="WP_004202941.1">
    <property type="nucleotide sequence ID" value="NC_009076.1"/>
</dbReference>
<dbReference type="SMR" id="A3NR95"/>
<dbReference type="GeneID" id="93059040"/>
<dbReference type="KEGG" id="bpl:BURPS1106A_0583"/>
<dbReference type="HOGENOM" id="CLU_062456_3_1_4"/>
<dbReference type="Proteomes" id="UP000006738">
    <property type="component" value="Chromosome I"/>
</dbReference>
<dbReference type="GO" id="GO:0005737">
    <property type="term" value="C:cytoplasm"/>
    <property type="evidence" value="ECO:0007669"/>
    <property type="project" value="UniProtKB-SubCell"/>
</dbReference>
<dbReference type="GO" id="GO:0004045">
    <property type="term" value="F:peptidyl-tRNA hydrolase activity"/>
    <property type="evidence" value="ECO:0007669"/>
    <property type="project" value="UniProtKB-UniRule"/>
</dbReference>
<dbReference type="GO" id="GO:0000049">
    <property type="term" value="F:tRNA binding"/>
    <property type="evidence" value="ECO:0007669"/>
    <property type="project" value="UniProtKB-UniRule"/>
</dbReference>
<dbReference type="GO" id="GO:0006515">
    <property type="term" value="P:protein quality control for misfolded or incompletely synthesized proteins"/>
    <property type="evidence" value="ECO:0007669"/>
    <property type="project" value="UniProtKB-UniRule"/>
</dbReference>
<dbReference type="GO" id="GO:0072344">
    <property type="term" value="P:rescue of stalled ribosome"/>
    <property type="evidence" value="ECO:0007669"/>
    <property type="project" value="UniProtKB-UniRule"/>
</dbReference>
<dbReference type="CDD" id="cd00462">
    <property type="entry name" value="PTH"/>
    <property type="match status" value="1"/>
</dbReference>
<dbReference type="FunFam" id="3.40.50.1470:FF:000001">
    <property type="entry name" value="Peptidyl-tRNA hydrolase"/>
    <property type="match status" value="1"/>
</dbReference>
<dbReference type="Gene3D" id="3.40.50.1470">
    <property type="entry name" value="Peptidyl-tRNA hydrolase"/>
    <property type="match status" value="1"/>
</dbReference>
<dbReference type="HAMAP" id="MF_00083">
    <property type="entry name" value="Pept_tRNA_hydro_bact"/>
    <property type="match status" value="1"/>
</dbReference>
<dbReference type="InterPro" id="IPR001328">
    <property type="entry name" value="Pept_tRNA_hydro"/>
</dbReference>
<dbReference type="InterPro" id="IPR018171">
    <property type="entry name" value="Pept_tRNA_hydro_CS"/>
</dbReference>
<dbReference type="InterPro" id="IPR036416">
    <property type="entry name" value="Pept_tRNA_hydro_sf"/>
</dbReference>
<dbReference type="NCBIfam" id="TIGR00447">
    <property type="entry name" value="pth"/>
    <property type="match status" value="1"/>
</dbReference>
<dbReference type="PANTHER" id="PTHR17224">
    <property type="entry name" value="PEPTIDYL-TRNA HYDROLASE"/>
    <property type="match status" value="1"/>
</dbReference>
<dbReference type="PANTHER" id="PTHR17224:SF1">
    <property type="entry name" value="PEPTIDYL-TRNA HYDROLASE"/>
    <property type="match status" value="1"/>
</dbReference>
<dbReference type="Pfam" id="PF01195">
    <property type="entry name" value="Pept_tRNA_hydro"/>
    <property type="match status" value="1"/>
</dbReference>
<dbReference type="SUPFAM" id="SSF53178">
    <property type="entry name" value="Peptidyl-tRNA hydrolase-like"/>
    <property type="match status" value="1"/>
</dbReference>
<dbReference type="PROSITE" id="PS01195">
    <property type="entry name" value="PEPT_TRNA_HYDROL_1"/>
    <property type="match status" value="1"/>
</dbReference>
<dbReference type="PROSITE" id="PS01196">
    <property type="entry name" value="PEPT_TRNA_HYDROL_2"/>
    <property type="match status" value="1"/>
</dbReference>
<gene>
    <name evidence="1" type="primary">pth</name>
    <name type="ordered locus">BURPS1106A_0583</name>
</gene>
<reference key="1">
    <citation type="journal article" date="2010" name="Genome Biol. Evol.">
        <title>Continuing evolution of Burkholderia mallei through genome reduction and large-scale rearrangements.</title>
        <authorList>
            <person name="Losada L."/>
            <person name="Ronning C.M."/>
            <person name="DeShazer D."/>
            <person name="Woods D."/>
            <person name="Fedorova N."/>
            <person name="Kim H.S."/>
            <person name="Shabalina S.A."/>
            <person name="Pearson T.R."/>
            <person name="Brinkac L."/>
            <person name="Tan P."/>
            <person name="Nandi T."/>
            <person name="Crabtree J."/>
            <person name="Badger J."/>
            <person name="Beckstrom-Sternberg S."/>
            <person name="Saqib M."/>
            <person name="Schutzer S.E."/>
            <person name="Keim P."/>
            <person name="Nierman W.C."/>
        </authorList>
    </citation>
    <scope>NUCLEOTIDE SEQUENCE [LARGE SCALE GENOMIC DNA]</scope>
    <source>
        <strain>1106a</strain>
    </source>
</reference>
<organism>
    <name type="scientific">Burkholderia pseudomallei (strain 1106a)</name>
    <dbReference type="NCBI Taxonomy" id="357348"/>
    <lineage>
        <taxon>Bacteria</taxon>
        <taxon>Pseudomonadati</taxon>
        <taxon>Pseudomonadota</taxon>
        <taxon>Betaproteobacteria</taxon>
        <taxon>Burkholderiales</taxon>
        <taxon>Burkholderiaceae</taxon>
        <taxon>Burkholderia</taxon>
        <taxon>pseudomallei group</taxon>
    </lineage>
</organism>
<comment type="function">
    <text evidence="1">Hydrolyzes ribosome-free peptidyl-tRNAs (with 1 or more amino acids incorporated), which drop off the ribosome during protein synthesis, or as a result of ribosome stalling.</text>
</comment>
<comment type="function">
    <text evidence="1">Catalyzes the release of premature peptidyl moieties from peptidyl-tRNA molecules trapped in stalled 50S ribosomal subunits, and thus maintains levels of free tRNAs and 50S ribosomes.</text>
</comment>
<comment type="catalytic activity">
    <reaction evidence="1">
        <text>an N-acyl-L-alpha-aminoacyl-tRNA + H2O = an N-acyl-L-amino acid + a tRNA + H(+)</text>
        <dbReference type="Rhea" id="RHEA:54448"/>
        <dbReference type="Rhea" id="RHEA-COMP:10123"/>
        <dbReference type="Rhea" id="RHEA-COMP:13883"/>
        <dbReference type="ChEBI" id="CHEBI:15377"/>
        <dbReference type="ChEBI" id="CHEBI:15378"/>
        <dbReference type="ChEBI" id="CHEBI:59874"/>
        <dbReference type="ChEBI" id="CHEBI:78442"/>
        <dbReference type="ChEBI" id="CHEBI:138191"/>
        <dbReference type="EC" id="3.1.1.29"/>
    </reaction>
</comment>
<comment type="subunit">
    <text evidence="1">Monomer.</text>
</comment>
<comment type="subcellular location">
    <subcellularLocation>
        <location evidence="1">Cytoplasm</location>
    </subcellularLocation>
</comment>
<comment type="similarity">
    <text evidence="1">Belongs to the PTH family.</text>
</comment>
<keyword id="KW-0963">Cytoplasm</keyword>
<keyword id="KW-0378">Hydrolase</keyword>
<keyword id="KW-0694">RNA-binding</keyword>
<keyword id="KW-0820">tRNA-binding</keyword>
<evidence type="ECO:0000255" key="1">
    <source>
        <dbReference type="HAMAP-Rule" id="MF_00083"/>
    </source>
</evidence>
<name>PTH_BURP0</name>